<comment type="function">
    <text evidence="1">Required for nuclear membrane fusion during karyogamy.</text>
</comment>
<comment type="subcellular location">
    <subcellularLocation>
        <location evidence="1">Endoplasmic reticulum membrane</location>
        <topology evidence="1">Multi-pass membrane protein</topology>
    </subcellularLocation>
    <subcellularLocation>
        <location evidence="1">Nucleus membrane</location>
        <topology evidence="1">Multi-pass membrane protein</topology>
    </subcellularLocation>
</comment>
<comment type="similarity">
    <text evidence="3">Belongs to the KAR5 family.</text>
</comment>
<reference key="1">
    <citation type="journal article" date="2009" name="Nature">
        <title>Evolution of pathogenicity and sexual reproduction in eight Candida genomes.</title>
        <authorList>
            <person name="Butler G."/>
            <person name="Rasmussen M.D."/>
            <person name="Lin M.F."/>
            <person name="Santos M.A.S."/>
            <person name="Sakthikumar S."/>
            <person name="Munro C.A."/>
            <person name="Rheinbay E."/>
            <person name="Grabherr M."/>
            <person name="Forche A."/>
            <person name="Reedy J.L."/>
            <person name="Agrafioti I."/>
            <person name="Arnaud M.B."/>
            <person name="Bates S."/>
            <person name="Brown A.J.P."/>
            <person name="Brunke S."/>
            <person name="Costanzo M.C."/>
            <person name="Fitzpatrick D.A."/>
            <person name="de Groot P.W.J."/>
            <person name="Harris D."/>
            <person name="Hoyer L.L."/>
            <person name="Hube B."/>
            <person name="Klis F.M."/>
            <person name="Kodira C."/>
            <person name="Lennard N."/>
            <person name="Logue M.E."/>
            <person name="Martin R."/>
            <person name="Neiman A.M."/>
            <person name="Nikolaou E."/>
            <person name="Quail M.A."/>
            <person name="Quinn J."/>
            <person name="Santos M.C."/>
            <person name="Schmitzberger F.F."/>
            <person name="Sherlock G."/>
            <person name="Shah P."/>
            <person name="Silverstein K.A.T."/>
            <person name="Skrzypek M.S."/>
            <person name="Soll D."/>
            <person name="Staggs R."/>
            <person name="Stansfield I."/>
            <person name="Stumpf M.P.H."/>
            <person name="Sudbery P.E."/>
            <person name="Srikantha T."/>
            <person name="Zeng Q."/>
            <person name="Berman J."/>
            <person name="Berriman M."/>
            <person name="Heitman J."/>
            <person name="Gow N.A.R."/>
            <person name="Lorenz M.C."/>
            <person name="Birren B.W."/>
            <person name="Kellis M."/>
            <person name="Cuomo C.A."/>
        </authorList>
    </citation>
    <scope>NUCLEOTIDE SEQUENCE [LARGE SCALE GENOMIC DNA]</scope>
    <source>
        <strain>ATCC 11503 / BCRC 21390 / CBS 2605 / JCM 1781 / NBRC 1676 / NRRL YB-4239</strain>
    </source>
</reference>
<feature type="signal peptide" evidence="2">
    <location>
        <begin position="1"/>
        <end position="22"/>
    </location>
</feature>
<feature type="chain" id="PRO_0000308774" description="Nuclear fusion protein KAR5">
    <location>
        <begin position="23"/>
        <end position="523"/>
    </location>
</feature>
<feature type="topological domain" description="Lumenal" evidence="1">
    <location>
        <begin position="23"/>
        <end position="469"/>
    </location>
</feature>
<feature type="transmembrane region" description="Helical" evidence="2">
    <location>
        <begin position="470"/>
        <end position="490"/>
    </location>
</feature>
<feature type="topological domain" description="Cytoplasmic" evidence="1">
    <location>
        <begin position="491"/>
        <end position="500"/>
    </location>
</feature>
<feature type="transmembrane region" description="Helical" evidence="2">
    <location>
        <begin position="501"/>
        <end position="521"/>
    </location>
</feature>
<feature type="topological domain" description="Lumenal" evidence="1">
    <location>
        <begin position="522"/>
        <end position="523"/>
    </location>
</feature>
<feature type="glycosylation site" description="N-linked (GlcNAc...) asparagine" evidence="2">
    <location>
        <position position="160"/>
    </location>
</feature>
<feature type="glycosylation site" description="N-linked (GlcNAc...) asparagine" evidence="2">
    <location>
        <position position="213"/>
    </location>
</feature>
<feature type="glycosylation site" description="N-linked (GlcNAc...) asparagine" evidence="2">
    <location>
        <position position="361"/>
    </location>
</feature>
<feature type="glycosylation site" description="N-linked (GlcNAc...) asparagine" evidence="2">
    <location>
        <position position="371"/>
    </location>
</feature>
<feature type="glycosylation site" description="N-linked (GlcNAc...) asparagine" evidence="2">
    <location>
        <position position="386"/>
    </location>
</feature>
<feature type="glycosylation site" description="N-linked (GlcNAc...) asparagine" evidence="2">
    <location>
        <position position="407"/>
    </location>
</feature>
<feature type="glycosylation site" description="N-linked (GlcNAc...) asparagine" evidence="2">
    <location>
        <position position="429"/>
    </location>
</feature>
<protein>
    <recommendedName>
        <fullName>Nuclear fusion protein KAR5</fullName>
    </recommendedName>
    <alternativeName>
        <fullName>Karyogamy protein 5</fullName>
    </alternativeName>
</protein>
<evidence type="ECO:0000250" key="1"/>
<evidence type="ECO:0000255" key="2"/>
<evidence type="ECO:0000305" key="3"/>
<name>KAR5_LODEL</name>
<gene>
    <name type="primary">KAR5</name>
    <name type="ORF">LELG_04687</name>
</gene>
<organism>
    <name type="scientific">Lodderomyces elongisporus (strain ATCC 11503 / CBS 2605 / JCM 1781 / NBRC 1676 / NRRL YB-4239)</name>
    <name type="common">Yeast</name>
    <name type="synonym">Saccharomyces elongisporus</name>
    <dbReference type="NCBI Taxonomy" id="379508"/>
    <lineage>
        <taxon>Eukaryota</taxon>
        <taxon>Fungi</taxon>
        <taxon>Dikarya</taxon>
        <taxon>Ascomycota</taxon>
        <taxon>Saccharomycotina</taxon>
        <taxon>Pichiomycetes</taxon>
        <taxon>Debaryomycetaceae</taxon>
        <taxon>Candida/Lodderomyces clade</taxon>
        <taxon>Lodderomyces</taxon>
    </lineage>
</organism>
<accession>A5E4Z8</accession>
<dbReference type="EMBL" id="CH981530">
    <property type="protein sequence ID" value="EDK46506.1"/>
    <property type="molecule type" value="Genomic_DNA"/>
</dbReference>
<dbReference type="RefSeq" id="XP_001523874.1">
    <property type="nucleotide sequence ID" value="XM_001523824.1"/>
</dbReference>
<dbReference type="SMR" id="A5E4Z8"/>
<dbReference type="GlyCosmos" id="A5E4Z8">
    <property type="glycosylation" value="7 sites, No reported glycans"/>
</dbReference>
<dbReference type="GeneID" id="5231200"/>
<dbReference type="KEGG" id="lel:PVL30_005417"/>
<dbReference type="VEuPathDB" id="FungiDB:LELG_04687"/>
<dbReference type="eggNOG" id="ENOG502QVCQ">
    <property type="taxonomic scope" value="Eukaryota"/>
</dbReference>
<dbReference type="HOGENOM" id="CLU_039530_0_0_1"/>
<dbReference type="InParanoid" id="A5E4Z8"/>
<dbReference type="OMA" id="LSICEFQ"/>
<dbReference type="OrthoDB" id="5311848at2759"/>
<dbReference type="Proteomes" id="UP000001996">
    <property type="component" value="Unassembled WGS sequence"/>
</dbReference>
<dbReference type="GO" id="GO:0005789">
    <property type="term" value="C:endoplasmic reticulum membrane"/>
    <property type="evidence" value="ECO:0007669"/>
    <property type="project" value="UniProtKB-SubCell"/>
</dbReference>
<dbReference type="GO" id="GO:0031965">
    <property type="term" value="C:nuclear membrane"/>
    <property type="evidence" value="ECO:0007669"/>
    <property type="project" value="UniProtKB-SubCell"/>
</dbReference>
<dbReference type="GO" id="GO:0000742">
    <property type="term" value="P:karyogamy involved in conjugation with cellular fusion"/>
    <property type="evidence" value="ECO:0007669"/>
    <property type="project" value="InterPro"/>
</dbReference>
<dbReference type="GO" id="GO:0048288">
    <property type="term" value="P:nuclear membrane fusion involved in karyogamy"/>
    <property type="evidence" value="ECO:0007669"/>
    <property type="project" value="InterPro"/>
</dbReference>
<dbReference type="InterPro" id="IPR007292">
    <property type="entry name" value="Nuclear_fusion_Kar5"/>
</dbReference>
<dbReference type="PANTHER" id="PTHR28012">
    <property type="entry name" value="NUCLEAR FUSION PROTEIN KAR5"/>
    <property type="match status" value="1"/>
</dbReference>
<dbReference type="PANTHER" id="PTHR28012:SF1">
    <property type="entry name" value="NUCLEAR FUSION PROTEIN KAR5"/>
    <property type="match status" value="1"/>
</dbReference>
<dbReference type="Pfam" id="PF04163">
    <property type="entry name" value="Tht1"/>
    <property type="match status" value="1"/>
</dbReference>
<sequence length="523" mass="58786">MVGASAISGVVIIANVVAAIAAAAGDGDGGIASTTDTILTLDGIKILNNALLQWKDDCNQRALAEVMPQCIHGVENITPSQQKHTAMELSICEFENNGLDYPLECHASVRNLNTNTCIQALEKSPQYWTTFSGNYRAVKDICHQISLPYEKDQIIEVYENMTLLYRSVMEDLKSSHHKYTVELEMKIQNKFNKLFSVVDDLMRSRAEENNKVNQTFNKFYENFQVSISNALVVMQNSYDGANTNFELMQRHVSYFATELQRILLLVQEQGEKLQVQQEQLVTGNVKLSIQQERLFDNMQLFGNELDKLHNAEVSRVSSVNKQLKLTEFSIRHANSILRENTDELHLQRMLIAEYTPIILGNITTLLMHFLNQSASEIVENFEHSLNLSLEKLSLKIDETANSLAVVNATIARCSIFASSVVETLDSLKNSTIRMMMLFMSMITPSVTFDGLISGAKAIIAFFTLVTRLAAVIAICLLIILIWPIVKSLFFQPLCYLMRRCSYIVVSILVGVAAANFSVWLLQK</sequence>
<keyword id="KW-0256">Endoplasmic reticulum</keyword>
<keyword id="KW-0325">Glycoprotein</keyword>
<keyword id="KW-0415">Karyogamy</keyword>
<keyword id="KW-0472">Membrane</keyword>
<keyword id="KW-0539">Nucleus</keyword>
<keyword id="KW-1185">Reference proteome</keyword>
<keyword id="KW-0732">Signal</keyword>
<keyword id="KW-0812">Transmembrane</keyword>
<keyword id="KW-1133">Transmembrane helix</keyword>
<proteinExistence type="inferred from homology"/>